<dbReference type="EC" id="3.6.-.-" evidence="1"/>
<dbReference type="EMBL" id="AP008231">
    <property type="protein sequence ID" value="BAD78229.1"/>
    <property type="status" value="ALT_INIT"/>
    <property type="molecule type" value="Genomic_DNA"/>
</dbReference>
<dbReference type="RefSeq" id="WP_041676881.1">
    <property type="nucleotide sequence ID" value="NC_006576.1"/>
</dbReference>
<dbReference type="SMR" id="Q5N638"/>
<dbReference type="KEGG" id="syc:syc0039_c"/>
<dbReference type="eggNOG" id="COG0486">
    <property type="taxonomic scope" value="Bacteria"/>
</dbReference>
<dbReference type="Proteomes" id="UP000001175">
    <property type="component" value="Chromosome"/>
</dbReference>
<dbReference type="GO" id="GO:0005829">
    <property type="term" value="C:cytosol"/>
    <property type="evidence" value="ECO:0007669"/>
    <property type="project" value="TreeGrafter"/>
</dbReference>
<dbReference type="GO" id="GO:0005525">
    <property type="term" value="F:GTP binding"/>
    <property type="evidence" value="ECO:0007669"/>
    <property type="project" value="UniProtKB-UniRule"/>
</dbReference>
<dbReference type="GO" id="GO:0003924">
    <property type="term" value="F:GTPase activity"/>
    <property type="evidence" value="ECO:0007669"/>
    <property type="project" value="UniProtKB-UniRule"/>
</dbReference>
<dbReference type="GO" id="GO:0046872">
    <property type="term" value="F:metal ion binding"/>
    <property type="evidence" value="ECO:0007669"/>
    <property type="project" value="UniProtKB-KW"/>
</dbReference>
<dbReference type="GO" id="GO:0030488">
    <property type="term" value="P:tRNA methylation"/>
    <property type="evidence" value="ECO:0007669"/>
    <property type="project" value="TreeGrafter"/>
</dbReference>
<dbReference type="GO" id="GO:0002098">
    <property type="term" value="P:tRNA wobble uridine modification"/>
    <property type="evidence" value="ECO:0007669"/>
    <property type="project" value="TreeGrafter"/>
</dbReference>
<dbReference type="CDD" id="cd04164">
    <property type="entry name" value="trmE"/>
    <property type="match status" value="1"/>
</dbReference>
<dbReference type="CDD" id="cd14858">
    <property type="entry name" value="TrmE_N"/>
    <property type="match status" value="1"/>
</dbReference>
<dbReference type="FunFam" id="3.30.1360.120:FF:000003">
    <property type="entry name" value="tRNA modification GTPase MnmE"/>
    <property type="match status" value="1"/>
</dbReference>
<dbReference type="FunFam" id="3.40.50.300:FF:000494">
    <property type="entry name" value="tRNA modification GTPase MnmE"/>
    <property type="match status" value="1"/>
</dbReference>
<dbReference type="Gene3D" id="3.40.50.300">
    <property type="entry name" value="P-loop containing nucleotide triphosphate hydrolases"/>
    <property type="match status" value="1"/>
</dbReference>
<dbReference type="Gene3D" id="3.30.1360.120">
    <property type="entry name" value="Probable tRNA modification gtpase trme, domain 1"/>
    <property type="match status" value="1"/>
</dbReference>
<dbReference type="Gene3D" id="1.20.120.430">
    <property type="entry name" value="tRNA modification GTPase MnmE domain 2"/>
    <property type="match status" value="1"/>
</dbReference>
<dbReference type="HAMAP" id="MF_00379">
    <property type="entry name" value="GTPase_MnmE"/>
    <property type="match status" value="1"/>
</dbReference>
<dbReference type="InterPro" id="IPR031168">
    <property type="entry name" value="G_TrmE"/>
</dbReference>
<dbReference type="InterPro" id="IPR006073">
    <property type="entry name" value="GTP-bd"/>
</dbReference>
<dbReference type="InterPro" id="IPR018948">
    <property type="entry name" value="GTP-bd_TrmE_N"/>
</dbReference>
<dbReference type="InterPro" id="IPR004520">
    <property type="entry name" value="GTPase_MnmE"/>
</dbReference>
<dbReference type="InterPro" id="IPR027368">
    <property type="entry name" value="MnmE_dom2"/>
</dbReference>
<dbReference type="InterPro" id="IPR025867">
    <property type="entry name" value="MnmE_helical"/>
</dbReference>
<dbReference type="InterPro" id="IPR027417">
    <property type="entry name" value="P-loop_NTPase"/>
</dbReference>
<dbReference type="InterPro" id="IPR005225">
    <property type="entry name" value="Small_GTP-bd"/>
</dbReference>
<dbReference type="InterPro" id="IPR027266">
    <property type="entry name" value="TrmE/GcvT_dom1"/>
</dbReference>
<dbReference type="NCBIfam" id="TIGR00450">
    <property type="entry name" value="mnmE_trmE_thdF"/>
    <property type="match status" value="1"/>
</dbReference>
<dbReference type="NCBIfam" id="TIGR00231">
    <property type="entry name" value="small_GTP"/>
    <property type="match status" value="1"/>
</dbReference>
<dbReference type="PANTHER" id="PTHR42714">
    <property type="entry name" value="TRNA MODIFICATION GTPASE GTPBP3"/>
    <property type="match status" value="1"/>
</dbReference>
<dbReference type="PANTHER" id="PTHR42714:SF2">
    <property type="entry name" value="TRNA MODIFICATION GTPASE GTPBP3, MITOCHONDRIAL"/>
    <property type="match status" value="1"/>
</dbReference>
<dbReference type="Pfam" id="PF01926">
    <property type="entry name" value="MMR_HSR1"/>
    <property type="match status" value="1"/>
</dbReference>
<dbReference type="Pfam" id="PF12631">
    <property type="entry name" value="MnmE_helical"/>
    <property type="match status" value="1"/>
</dbReference>
<dbReference type="Pfam" id="PF10396">
    <property type="entry name" value="TrmE_N"/>
    <property type="match status" value="1"/>
</dbReference>
<dbReference type="SUPFAM" id="SSF52540">
    <property type="entry name" value="P-loop containing nucleoside triphosphate hydrolases"/>
    <property type="match status" value="1"/>
</dbReference>
<dbReference type="SUPFAM" id="SSF116878">
    <property type="entry name" value="TrmE connector domain"/>
    <property type="match status" value="1"/>
</dbReference>
<dbReference type="PROSITE" id="PS51709">
    <property type="entry name" value="G_TRME"/>
    <property type="match status" value="1"/>
</dbReference>
<feature type="chain" id="PRO_0000345915" description="tRNA modification GTPase MnmE">
    <location>
        <begin position="1"/>
        <end position="462"/>
    </location>
</feature>
<feature type="domain" description="TrmE-type G">
    <location>
        <begin position="223"/>
        <end position="383"/>
    </location>
</feature>
<feature type="binding site" evidence="1">
    <location>
        <position position="27"/>
    </location>
    <ligand>
        <name>(6S)-5-formyl-5,6,7,8-tetrahydrofolate</name>
        <dbReference type="ChEBI" id="CHEBI:57457"/>
    </ligand>
</feature>
<feature type="binding site" evidence="1">
    <location>
        <position position="89"/>
    </location>
    <ligand>
        <name>(6S)-5-formyl-5,6,7,8-tetrahydrofolate</name>
        <dbReference type="ChEBI" id="CHEBI:57457"/>
    </ligand>
</feature>
<feature type="binding site" evidence="1">
    <location>
        <position position="128"/>
    </location>
    <ligand>
        <name>(6S)-5-formyl-5,6,7,8-tetrahydrofolate</name>
        <dbReference type="ChEBI" id="CHEBI:57457"/>
    </ligand>
</feature>
<feature type="binding site" evidence="1">
    <location>
        <begin position="233"/>
        <end position="238"/>
    </location>
    <ligand>
        <name>GTP</name>
        <dbReference type="ChEBI" id="CHEBI:37565"/>
    </ligand>
</feature>
<feature type="binding site" evidence="1">
    <location>
        <position position="237"/>
    </location>
    <ligand>
        <name>Mg(2+)</name>
        <dbReference type="ChEBI" id="CHEBI:18420"/>
    </ligand>
</feature>
<feature type="binding site" evidence="1">
    <location>
        <begin position="252"/>
        <end position="258"/>
    </location>
    <ligand>
        <name>GTP</name>
        <dbReference type="ChEBI" id="CHEBI:37565"/>
    </ligand>
</feature>
<feature type="binding site" evidence="1">
    <location>
        <position position="258"/>
    </location>
    <ligand>
        <name>Mg(2+)</name>
        <dbReference type="ChEBI" id="CHEBI:18420"/>
    </ligand>
</feature>
<feature type="binding site" evidence="1">
    <location>
        <begin position="277"/>
        <end position="280"/>
    </location>
    <ligand>
        <name>GTP</name>
        <dbReference type="ChEBI" id="CHEBI:37565"/>
    </ligand>
</feature>
<feature type="binding site" evidence="1">
    <location>
        <position position="462"/>
    </location>
    <ligand>
        <name>(6S)-5-formyl-5,6,7,8-tetrahydrofolate</name>
        <dbReference type="ChEBI" id="CHEBI:57457"/>
    </ligand>
</feature>
<protein>
    <recommendedName>
        <fullName evidence="1">tRNA modification GTPase MnmE</fullName>
        <ecNumber evidence="1">3.6.-.-</ecNumber>
    </recommendedName>
</protein>
<reference key="1">
    <citation type="journal article" date="2007" name="Photosyn. Res.">
        <title>Complete nucleotide sequence of the freshwater unicellular cyanobacterium Synechococcus elongatus PCC 6301 chromosome: gene content and organization.</title>
        <authorList>
            <person name="Sugita C."/>
            <person name="Ogata K."/>
            <person name="Shikata M."/>
            <person name="Jikuya H."/>
            <person name="Takano J."/>
            <person name="Furumichi M."/>
            <person name="Kanehisa M."/>
            <person name="Omata T."/>
            <person name="Sugiura M."/>
            <person name="Sugita M."/>
        </authorList>
    </citation>
    <scope>NUCLEOTIDE SEQUENCE [LARGE SCALE GENOMIC DNA]</scope>
    <source>
        <strain>ATCC 27144 / PCC 6301 / SAUG 1402/1</strain>
    </source>
</reference>
<sequence>MVGFSGDTIAAIATAIVPQQGSVGIVRLSGAAATEIARQIFQIAGQQPWESHRILYGYIRDPESGRLVDEALLLPMLAPRSYTREDVVELHCHGGLMPVQQTLQLCIRAGARLAEPGEFTLRAFLNGRLDLSQAESIADLISAQSPQAAQAALGSLQGKLGHPIRQLRDRCLDILAEVEARIDFEDDLPPLDLEAIAAQLTAAGADMQAILSTADRGELLRTGLKIAIVGRPNVGKSSLLNAWSRCDRAIVTDLPGRTRDLVESQLIVGGIPVQVLDTAGIRETSDQVEQIGVERSRRAAQSADLVLLTIDASAGWSAEDQTIWEAVSDRPILLVINKRDRLSEAERHAIALPQQEFKAIVWTAAAQQKGIEDLEAAILAAVGTGDLTSANWDWALNQRQVAALTTAQTALRRVEETLQAQLPLDFWTIDLREAIAALGSITGEGIAESMLDLIFSRFCIGK</sequence>
<accession>Q5N638</accession>
<organism>
    <name type="scientific">Synechococcus sp. (strain ATCC 27144 / PCC 6301 / SAUG 1402/1)</name>
    <name type="common">Anacystis nidulans</name>
    <dbReference type="NCBI Taxonomy" id="269084"/>
    <lineage>
        <taxon>Bacteria</taxon>
        <taxon>Bacillati</taxon>
        <taxon>Cyanobacteriota</taxon>
        <taxon>Cyanophyceae</taxon>
        <taxon>Synechococcales</taxon>
        <taxon>Synechococcaceae</taxon>
        <taxon>Synechococcus</taxon>
    </lineage>
</organism>
<gene>
    <name evidence="1" type="primary">mnmE</name>
    <name evidence="1" type="synonym">trmE</name>
    <name type="ordered locus">syc0039_c</name>
</gene>
<keyword id="KW-0963">Cytoplasm</keyword>
<keyword id="KW-0342">GTP-binding</keyword>
<keyword id="KW-0378">Hydrolase</keyword>
<keyword id="KW-0460">Magnesium</keyword>
<keyword id="KW-0479">Metal-binding</keyword>
<keyword id="KW-0547">Nucleotide-binding</keyword>
<keyword id="KW-0630">Potassium</keyword>
<keyword id="KW-0819">tRNA processing</keyword>
<comment type="function">
    <text evidence="1">Exhibits a very high intrinsic GTPase hydrolysis rate. Involved in the addition of a carboxymethylaminomethyl (cmnm) group at the wobble position (U34) of certain tRNAs, forming tRNA-cmnm(5)s(2)U34.</text>
</comment>
<comment type="cofactor">
    <cofactor evidence="1">
        <name>K(+)</name>
        <dbReference type="ChEBI" id="CHEBI:29103"/>
    </cofactor>
    <text evidence="1">Binds 1 potassium ion per subunit.</text>
</comment>
<comment type="subunit">
    <text evidence="1">Homodimer. Heterotetramer of two MnmE and two MnmG subunits.</text>
</comment>
<comment type="subcellular location">
    <subcellularLocation>
        <location evidence="1">Cytoplasm</location>
    </subcellularLocation>
</comment>
<comment type="similarity">
    <text evidence="1">Belongs to the TRAFAC class TrmE-Era-EngA-EngB-Septin-like GTPase superfamily. TrmE GTPase family.</text>
</comment>
<comment type="sequence caution" evidence="2">
    <conflict type="erroneous initiation">
        <sequence resource="EMBL-CDS" id="BAD78229"/>
    </conflict>
</comment>
<name>MNME_SYNP6</name>
<proteinExistence type="inferred from homology"/>
<evidence type="ECO:0000255" key="1">
    <source>
        <dbReference type="HAMAP-Rule" id="MF_00379"/>
    </source>
</evidence>
<evidence type="ECO:0000305" key="2"/>